<proteinExistence type="inferred from homology"/>
<comment type="function">
    <text evidence="1">May be required for cellular fusion during osteoclastogenesis.</text>
</comment>
<comment type="subcellular location">
    <subcellularLocation>
        <location evidence="5">Membrane</location>
        <topology evidence="5">Multi-pass membrane protein</topology>
    </subcellularLocation>
</comment>
<comment type="similarity">
    <text evidence="5">Belongs to the TCTA family.</text>
</comment>
<dbReference type="EMBL" id="BC103014">
    <property type="protein sequence ID" value="AAI03015.1"/>
    <property type="molecule type" value="mRNA"/>
</dbReference>
<dbReference type="EMBL" id="BT020664">
    <property type="protein sequence ID" value="AAX08681.1"/>
    <property type="molecule type" value="mRNA"/>
</dbReference>
<dbReference type="RefSeq" id="NP_001029961.1">
    <property type="nucleotide sequence ID" value="NM_001034789.2"/>
</dbReference>
<dbReference type="FunCoup" id="Q5EAA5">
    <property type="interactions" value="490"/>
</dbReference>
<dbReference type="STRING" id="9913.ENSBTAP00000030636"/>
<dbReference type="PaxDb" id="9913-ENSBTAP00000030636"/>
<dbReference type="GeneID" id="616169"/>
<dbReference type="KEGG" id="bta:616169"/>
<dbReference type="CTD" id="6988"/>
<dbReference type="VEuPathDB" id="HostDB:ENSBTAG00000022632"/>
<dbReference type="eggNOG" id="ENOG502S6IC">
    <property type="taxonomic scope" value="Eukaryota"/>
</dbReference>
<dbReference type="HOGENOM" id="CLU_157357_0_0_1"/>
<dbReference type="InParanoid" id="Q5EAA5"/>
<dbReference type="OMA" id="SMWESTS"/>
<dbReference type="OrthoDB" id="9529463at2759"/>
<dbReference type="TreeFam" id="TF330748"/>
<dbReference type="Proteomes" id="UP000009136">
    <property type="component" value="Chromosome 22"/>
</dbReference>
<dbReference type="Bgee" id="ENSBTAG00000022632">
    <property type="expression patterns" value="Expressed in corpus epididymis and 105 other cell types or tissues"/>
</dbReference>
<dbReference type="GO" id="GO:0016020">
    <property type="term" value="C:membrane"/>
    <property type="evidence" value="ECO:0007669"/>
    <property type="project" value="UniProtKB-SubCell"/>
</dbReference>
<dbReference type="GO" id="GO:0072675">
    <property type="term" value="P:osteoclast fusion"/>
    <property type="evidence" value="ECO:0000318"/>
    <property type="project" value="GO_Central"/>
</dbReference>
<dbReference type="InterPro" id="IPR016560">
    <property type="entry name" value="TCTA"/>
</dbReference>
<dbReference type="PANTHER" id="PTHR32267">
    <property type="entry name" value="T-CELL LEUKEMIA TRANSLOCATION-ALTERED GENE PROTEIN"/>
    <property type="match status" value="1"/>
</dbReference>
<dbReference type="PANTHER" id="PTHR32267:SF2">
    <property type="entry name" value="T-CELL LEUKEMIA TRANSLOCATION-ALTERED GENE PROTEIN"/>
    <property type="match status" value="1"/>
</dbReference>
<dbReference type="Pfam" id="PF15128">
    <property type="entry name" value="T_cell_tran_alt"/>
    <property type="match status" value="1"/>
</dbReference>
<dbReference type="PIRSF" id="PIRSF009935">
    <property type="entry name" value="TCTA"/>
    <property type="match status" value="1"/>
</dbReference>
<organism>
    <name type="scientific">Bos taurus</name>
    <name type="common">Bovine</name>
    <dbReference type="NCBI Taxonomy" id="9913"/>
    <lineage>
        <taxon>Eukaryota</taxon>
        <taxon>Metazoa</taxon>
        <taxon>Chordata</taxon>
        <taxon>Craniata</taxon>
        <taxon>Vertebrata</taxon>
        <taxon>Euteleostomi</taxon>
        <taxon>Mammalia</taxon>
        <taxon>Eutheria</taxon>
        <taxon>Laurasiatheria</taxon>
        <taxon>Artiodactyla</taxon>
        <taxon>Ruminantia</taxon>
        <taxon>Pecora</taxon>
        <taxon>Bovidae</taxon>
        <taxon>Bovinae</taxon>
        <taxon>Bos</taxon>
    </lineage>
</organism>
<name>TCTA_BOVIN</name>
<evidence type="ECO:0000250" key="1"/>
<evidence type="ECO:0000250" key="2">
    <source>
        <dbReference type="UniProtKB" id="P57738"/>
    </source>
</evidence>
<evidence type="ECO:0000255" key="3"/>
<evidence type="ECO:0000256" key="4">
    <source>
        <dbReference type="SAM" id="MobiDB-lite"/>
    </source>
</evidence>
<evidence type="ECO:0000305" key="5"/>
<keyword id="KW-0007">Acetylation</keyword>
<keyword id="KW-0472">Membrane</keyword>
<keyword id="KW-1185">Reference proteome</keyword>
<keyword id="KW-0812">Transmembrane</keyword>
<keyword id="KW-1133">Transmembrane helix</keyword>
<feature type="initiator methionine" description="Removed" evidence="2">
    <location>
        <position position="1"/>
    </location>
</feature>
<feature type="chain" id="PRO_0000301678" description="T-cell leukemia translocation-altered gene protein homolog">
    <location>
        <begin position="2"/>
        <end position="106"/>
    </location>
</feature>
<feature type="topological domain" description="Extracellular" evidence="3">
    <location>
        <begin position="2"/>
        <end position="8"/>
    </location>
</feature>
<feature type="transmembrane region" description="Helical" evidence="3">
    <location>
        <begin position="9"/>
        <end position="29"/>
    </location>
</feature>
<feature type="topological domain" description="Cytoplasmic" evidence="3">
    <location>
        <begin position="30"/>
        <end position="43"/>
    </location>
</feature>
<feature type="transmembrane region" description="Helical" evidence="3">
    <location>
        <begin position="44"/>
        <end position="64"/>
    </location>
</feature>
<feature type="topological domain" description="Extracellular" evidence="3">
    <location>
        <begin position="65"/>
        <end position="106"/>
    </location>
</feature>
<feature type="region of interest" description="Disordered" evidence="4">
    <location>
        <begin position="74"/>
        <end position="106"/>
    </location>
</feature>
<feature type="compositionally biased region" description="Polar residues" evidence="4">
    <location>
        <begin position="81"/>
        <end position="90"/>
    </location>
</feature>
<feature type="modified residue" description="N-acetylalanine" evidence="2">
    <location>
        <position position="2"/>
    </location>
</feature>
<reference key="1">
    <citation type="journal article" date="2005" name="BMC Genomics">
        <title>Characterization of 954 bovine full-CDS cDNA sequences.</title>
        <authorList>
            <person name="Harhay G.P."/>
            <person name="Sonstegard T.S."/>
            <person name="Keele J.W."/>
            <person name="Heaton M.P."/>
            <person name="Clawson M.L."/>
            <person name="Snelling W.M."/>
            <person name="Wiedmann R.T."/>
            <person name="Van Tassell C.P."/>
            <person name="Smith T.P.L."/>
        </authorList>
    </citation>
    <scope>NUCLEOTIDE SEQUENCE [LARGE SCALE MRNA]</scope>
</reference>
<reference key="2">
    <citation type="submission" date="2005-08" db="EMBL/GenBank/DDBJ databases">
        <authorList>
            <consortium name="NIH - Mammalian Gene Collection (MGC) project"/>
        </authorList>
    </citation>
    <scope>NUCLEOTIDE SEQUENCE [LARGE SCALE MRNA]</scope>
    <source>
        <strain>Crossbred X Angus</strain>
        <tissue>Ileum</tissue>
    </source>
</reference>
<protein>
    <recommendedName>
        <fullName>T-cell leukemia translocation-altered gene protein homolog</fullName>
    </recommendedName>
</protein>
<gene>
    <name type="primary">TCTA</name>
</gene>
<sequence length="106" mass="11615">MAEPWSGQSLQALPATVLGALGALGSEFLREWEAQDMRVTLFKLLLFWLVLSLLSIQLAWGFYGSTVTGLYHRPGLGGQNGSTPDGSTHFPSWETAANEPLKTHRE</sequence>
<accession>Q5EAA5</accession>